<keyword id="KW-0131">Cell cycle</keyword>
<keyword id="KW-0132">Cell division</keyword>
<keyword id="KW-0159">Chromosome partition</keyword>
<keyword id="KW-0963">Cytoplasm</keyword>
<keyword id="KW-0229">DNA integration</keyword>
<keyword id="KW-0233">DNA recombination</keyword>
<keyword id="KW-0238">DNA-binding</keyword>
<keyword id="KW-1185">Reference proteome</keyword>
<accession>Q88MV0</accession>
<evidence type="ECO:0000255" key="1">
    <source>
        <dbReference type="HAMAP-Rule" id="MF_01807"/>
    </source>
</evidence>
<evidence type="ECO:0000255" key="2">
    <source>
        <dbReference type="PROSITE-ProRule" id="PRU01246"/>
    </source>
</evidence>
<evidence type="ECO:0000255" key="3">
    <source>
        <dbReference type="PROSITE-ProRule" id="PRU01248"/>
    </source>
</evidence>
<dbReference type="EMBL" id="AE015451">
    <property type="protein sequence ID" value="AAN67090.1"/>
    <property type="molecule type" value="Genomic_DNA"/>
</dbReference>
<dbReference type="RefSeq" id="NP_743626.1">
    <property type="nucleotide sequence ID" value="NC_002947.4"/>
</dbReference>
<dbReference type="RefSeq" id="WP_003252154.1">
    <property type="nucleotide sequence ID" value="NZ_CP169744.1"/>
</dbReference>
<dbReference type="SMR" id="Q88MV0"/>
<dbReference type="STRING" id="160488.PP_1468"/>
<dbReference type="PaxDb" id="160488-PP_1468"/>
<dbReference type="GeneID" id="83681997"/>
<dbReference type="KEGG" id="ppu:PP_1468"/>
<dbReference type="PATRIC" id="fig|160488.4.peg.1558"/>
<dbReference type="eggNOG" id="COG4974">
    <property type="taxonomic scope" value="Bacteria"/>
</dbReference>
<dbReference type="HOGENOM" id="CLU_027562_9_0_6"/>
<dbReference type="OrthoDB" id="9801717at2"/>
<dbReference type="PhylomeDB" id="Q88MV0"/>
<dbReference type="BioCyc" id="PPUT160488:G1G01-1560-MONOMER"/>
<dbReference type="Proteomes" id="UP000000556">
    <property type="component" value="Chromosome"/>
</dbReference>
<dbReference type="GO" id="GO:0005737">
    <property type="term" value="C:cytoplasm"/>
    <property type="evidence" value="ECO:0007669"/>
    <property type="project" value="UniProtKB-SubCell"/>
</dbReference>
<dbReference type="GO" id="GO:0003677">
    <property type="term" value="F:DNA binding"/>
    <property type="evidence" value="ECO:0007669"/>
    <property type="project" value="UniProtKB-KW"/>
</dbReference>
<dbReference type="GO" id="GO:0009037">
    <property type="term" value="F:tyrosine-based site-specific recombinase activity"/>
    <property type="evidence" value="ECO:0007669"/>
    <property type="project" value="UniProtKB-UniRule"/>
</dbReference>
<dbReference type="GO" id="GO:0051301">
    <property type="term" value="P:cell division"/>
    <property type="evidence" value="ECO:0007669"/>
    <property type="project" value="UniProtKB-KW"/>
</dbReference>
<dbReference type="GO" id="GO:0007059">
    <property type="term" value="P:chromosome segregation"/>
    <property type="evidence" value="ECO:0007669"/>
    <property type="project" value="UniProtKB-UniRule"/>
</dbReference>
<dbReference type="GO" id="GO:0006313">
    <property type="term" value="P:DNA transposition"/>
    <property type="evidence" value="ECO:0007669"/>
    <property type="project" value="UniProtKB-UniRule"/>
</dbReference>
<dbReference type="CDD" id="cd00798">
    <property type="entry name" value="INT_XerDC_C"/>
    <property type="match status" value="1"/>
</dbReference>
<dbReference type="Gene3D" id="1.10.150.130">
    <property type="match status" value="1"/>
</dbReference>
<dbReference type="Gene3D" id="1.10.443.10">
    <property type="entry name" value="Intergrase catalytic core"/>
    <property type="match status" value="1"/>
</dbReference>
<dbReference type="HAMAP" id="MF_01808">
    <property type="entry name" value="Recomb_XerC_XerD"/>
    <property type="match status" value="1"/>
</dbReference>
<dbReference type="HAMAP" id="MF_01807">
    <property type="entry name" value="Recomb_XerD"/>
    <property type="match status" value="1"/>
</dbReference>
<dbReference type="InterPro" id="IPR044068">
    <property type="entry name" value="CB"/>
</dbReference>
<dbReference type="InterPro" id="IPR011010">
    <property type="entry name" value="DNA_brk_join_enz"/>
</dbReference>
<dbReference type="InterPro" id="IPR013762">
    <property type="entry name" value="Integrase-like_cat_sf"/>
</dbReference>
<dbReference type="InterPro" id="IPR002104">
    <property type="entry name" value="Integrase_catalytic"/>
</dbReference>
<dbReference type="InterPro" id="IPR010998">
    <property type="entry name" value="Integrase_recombinase_N"/>
</dbReference>
<dbReference type="InterPro" id="IPR004107">
    <property type="entry name" value="Integrase_SAM-like_N"/>
</dbReference>
<dbReference type="InterPro" id="IPR011932">
    <property type="entry name" value="Recomb_XerD"/>
</dbReference>
<dbReference type="InterPro" id="IPR023009">
    <property type="entry name" value="Tyrosine_recombinase_XerC/XerD"/>
</dbReference>
<dbReference type="InterPro" id="IPR050090">
    <property type="entry name" value="Tyrosine_recombinase_XerCD"/>
</dbReference>
<dbReference type="NCBIfam" id="NF001399">
    <property type="entry name" value="PRK00283.1"/>
    <property type="match status" value="1"/>
</dbReference>
<dbReference type="NCBIfam" id="TIGR02225">
    <property type="entry name" value="recomb_XerD"/>
    <property type="match status" value="1"/>
</dbReference>
<dbReference type="PANTHER" id="PTHR30349">
    <property type="entry name" value="PHAGE INTEGRASE-RELATED"/>
    <property type="match status" value="1"/>
</dbReference>
<dbReference type="PANTHER" id="PTHR30349:SF90">
    <property type="entry name" value="TYROSINE RECOMBINASE XERD"/>
    <property type="match status" value="1"/>
</dbReference>
<dbReference type="Pfam" id="PF02899">
    <property type="entry name" value="Phage_int_SAM_1"/>
    <property type="match status" value="1"/>
</dbReference>
<dbReference type="Pfam" id="PF00589">
    <property type="entry name" value="Phage_integrase"/>
    <property type="match status" value="1"/>
</dbReference>
<dbReference type="SUPFAM" id="SSF56349">
    <property type="entry name" value="DNA breaking-rejoining enzymes"/>
    <property type="match status" value="1"/>
</dbReference>
<dbReference type="PROSITE" id="PS51900">
    <property type="entry name" value="CB"/>
    <property type="match status" value="1"/>
</dbReference>
<dbReference type="PROSITE" id="PS51898">
    <property type="entry name" value="TYR_RECOMBINASE"/>
    <property type="match status" value="1"/>
</dbReference>
<sequence>MPALDHPLIDQFLDALWLEKGLSDNTRVSYRSDLALFNGWLQEHSVSLPDAGRDLILDHLAWRLDQGYKPRSTARFLSGLRGFFRYLLREKLVAIDPTLQVDMPQLGKPLPKSLSEADVEALLQAPDLGEAIGQRDRAMLEVLYACGLRVTELVSLTLDQVNLRQGVLRVMGKGSKERLVPMGEEAVVWLERYQRDGRAELLNGRPSDVLFPSQRGEQMTRQTFWHRIKHHARVAGIDKPLSPHTLRHAFATHLLNHGADLRVVQMLLGHSDLSTTQIYTHVAKARLQQLHAQHHPRG</sequence>
<protein>
    <recommendedName>
        <fullName evidence="1">Tyrosine recombinase XerD</fullName>
    </recommendedName>
</protein>
<reference key="1">
    <citation type="journal article" date="2002" name="Environ. Microbiol.">
        <title>Complete genome sequence and comparative analysis of the metabolically versatile Pseudomonas putida KT2440.</title>
        <authorList>
            <person name="Nelson K.E."/>
            <person name="Weinel C."/>
            <person name="Paulsen I.T."/>
            <person name="Dodson R.J."/>
            <person name="Hilbert H."/>
            <person name="Martins dos Santos V.A.P."/>
            <person name="Fouts D.E."/>
            <person name="Gill S.R."/>
            <person name="Pop M."/>
            <person name="Holmes M."/>
            <person name="Brinkac L.M."/>
            <person name="Beanan M.J."/>
            <person name="DeBoy R.T."/>
            <person name="Daugherty S.C."/>
            <person name="Kolonay J.F."/>
            <person name="Madupu R."/>
            <person name="Nelson W.C."/>
            <person name="White O."/>
            <person name="Peterson J.D."/>
            <person name="Khouri H.M."/>
            <person name="Hance I."/>
            <person name="Chris Lee P."/>
            <person name="Holtzapple E.K."/>
            <person name="Scanlan D."/>
            <person name="Tran K."/>
            <person name="Moazzez A."/>
            <person name="Utterback T.R."/>
            <person name="Rizzo M."/>
            <person name="Lee K."/>
            <person name="Kosack D."/>
            <person name="Moestl D."/>
            <person name="Wedler H."/>
            <person name="Lauber J."/>
            <person name="Stjepandic D."/>
            <person name="Hoheisel J."/>
            <person name="Straetz M."/>
            <person name="Heim S."/>
            <person name="Kiewitz C."/>
            <person name="Eisen J.A."/>
            <person name="Timmis K.N."/>
            <person name="Duesterhoeft A."/>
            <person name="Tuemmler B."/>
            <person name="Fraser C.M."/>
        </authorList>
    </citation>
    <scope>NUCLEOTIDE SEQUENCE [LARGE SCALE GENOMIC DNA]</scope>
    <source>
        <strain>ATCC 47054 / DSM 6125 / CFBP 8728 / NCIMB 11950 / KT2440</strain>
    </source>
</reference>
<name>XERD_PSEPK</name>
<comment type="function">
    <text evidence="1">Site-specific tyrosine recombinase, which acts by catalyzing the cutting and rejoining of the recombining DNA molecules. The XerC-XerD complex is essential to convert dimers of the bacterial chromosome into monomers to permit their segregation at cell division. It also contributes to the segregational stability of plasmids.</text>
</comment>
<comment type="subunit">
    <text evidence="1">Forms a cyclic heterotetrameric complex composed of two molecules of XerC and two molecules of XerD.</text>
</comment>
<comment type="subcellular location">
    <subcellularLocation>
        <location evidence="1">Cytoplasm</location>
    </subcellularLocation>
</comment>
<comment type="similarity">
    <text evidence="1">Belongs to the 'phage' integrase family. XerD subfamily.</text>
</comment>
<feature type="chain" id="PRO_0000095406" description="Tyrosine recombinase XerD">
    <location>
        <begin position="1"/>
        <end position="298"/>
    </location>
</feature>
<feature type="domain" description="Core-binding (CB)" evidence="3">
    <location>
        <begin position="3"/>
        <end position="88"/>
    </location>
</feature>
<feature type="domain" description="Tyr recombinase" evidence="2">
    <location>
        <begin position="109"/>
        <end position="292"/>
    </location>
</feature>
<feature type="active site" evidence="1">
    <location>
        <position position="149"/>
    </location>
</feature>
<feature type="active site" evidence="1">
    <location>
        <position position="173"/>
    </location>
</feature>
<feature type="active site" evidence="1">
    <location>
        <position position="244"/>
    </location>
</feature>
<feature type="active site" evidence="1">
    <location>
        <position position="247"/>
    </location>
</feature>
<feature type="active site" evidence="1">
    <location>
        <position position="270"/>
    </location>
</feature>
<feature type="active site" description="O-(3'-phospho-DNA)-tyrosine intermediate" evidence="1">
    <location>
        <position position="279"/>
    </location>
</feature>
<proteinExistence type="inferred from homology"/>
<gene>
    <name evidence="1" type="primary">xerD</name>
    <name type="ordered locus">PP_1468</name>
</gene>
<organism>
    <name type="scientific">Pseudomonas putida (strain ATCC 47054 / DSM 6125 / CFBP 8728 / NCIMB 11950 / KT2440)</name>
    <dbReference type="NCBI Taxonomy" id="160488"/>
    <lineage>
        <taxon>Bacteria</taxon>
        <taxon>Pseudomonadati</taxon>
        <taxon>Pseudomonadota</taxon>
        <taxon>Gammaproteobacteria</taxon>
        <taxon>Pseudomonadales</taxon>
        <taxon>Pseudomonadaceae</taxon>
        <taxon>Pseudomonas</taxon>
    </lineage>
</organism>